<keyword id="KW-0175">Coiled coil</keyword>
<keyword id="KW-0221">Differentiation</keyword>
<keyword id="KW-0238">DNA-binding</keyword>
<keyword id="KW-0371">Homeobox</keyword>
<keyword id="KW-0539">Nucleus</keyword>
<keyword id="KW-1185">Reference proteome</keyword>
<keyword id="KW-0804">Transcription</keyword>
<keyword id="KW-0805">Transcription regulation</keyword>
<organism>
    <name type="scientific">Arabidopsis thaliana</name>
    <name type="common">Mouse-ear cress</name>
    <dbReference type="NCBI Taxonomy" id="3702"/>
    <lineage>
        <taxon>Eukaryota</taxon>
        <taxon>Viridiplantae</taxon>
        <taxon>Streptophyta</taxon>
        <taxon>Embryophyta</taxon>
        <taxon>Tracheophyta</taxon>
        <taxon>Spermatophyta</taxon>
        <taxon>Magnoliopsida</taxon>
        <taxon>eudicotyledons</taxon>
        <taxon>Gunneridae</taxon>
        <taxon>Pentapetalae</taxon>
        <taxon>rosids</taxon>
        <taxon>malvids</taxon>
        <taxon>Brassicales</taxon>
        <taxon>Brassicaceae</taxon>
        <taxon>Camelineae</taxon>
        <taxon>Arabidopsis</taxon>
    </lineage>
</organism>
<accession>Q8RWU4</accession>
<accession>Q38887</accession>
<accession>Q9SVS2</accession>
<feature type="chain" id="PRO_0000331662" description="Homeobox-leucine zipper protein MERISTEM L1">
    <location>
        <begin position="1"/>
        <end position="762"/>
    </location>
</feature>
<feature type="domain" description="START" evidence="3">
    <location>
        <begin position="253"/>
        <end position="484"/>
    </location>
</feature>
<feature type="DNA-binding region" description="Homeobox" evidence="2">
    <location>
        <begin position="62"/>
        <end position="121"/>
    </location>
</feature>
<feature type="region of interest" description="Disordered" evidence="4">
    <location>
        <begin position="13"/>
        <end position="72"/>
    </location>
</feature>
<feature type="coiled-coil region" evidence="1">
    <location>
        <begin position="110"/>
        <end position="192"/>
    </location>
</feature>
<feature type="compositionally biased region" description="Basic and acidic residues" evidence="4">
    <location>
        <begin position="30"/>
        <end position="39"/>
    </location>
</feature>
<feature type="compositionally biased region" description="Basic residues" evidence="4">
    <location>
        <begin position="60"/>
        <end position="71"/>
    </location>
</feature>
<feature type="sequence conflict" description="In Ref. 1; AAB49378." evidence="12" ref="1">
    <original>A</original>
    <variation>R</variation>
    <location>
        <position position="362"/>
    </location>
</feature>
<feature type="sequence conflict" description="In Ref. 1; AAB49378." evidence="12" ref="1">
    <original>H</original>
    <variation>D</variation>
    <location>
        <position position="528"/>
    </location>
</feature>
<evidence type="ECO:0000255" key="1"/>
<evidence type="ECO:0000255" key="2">
    <source>
        <dbReference type="PROSITE-ProRule" id="PRU00108"/>
    </source>
</evidence>
<evidence type="ECO:0000255" key="3">
    <source>
        <dbReference type="PROSITE-ProRule" id="PRU00197"/>
    </source>
</evidence>
<evidence type="ECO:0000256" key="4">
    <source>
        <dbReference type="SAM" id="MobiDB-lite"/>
    </source>
</evidence>
<evidence type="ECO:0000269" key="5">
    <source>
    </source>
</evidence>
<evidence type="ECO:0000269" key="6">
    <source>
    </source>
</evidence>
<evidence type="ECO:0000269" key="7">
    <source>
    </source>
</evidence>
<evidence type="ECO:0000269" key="8">
    <source>
    </source>
</evidence>
<evidence type="ECO:0000269" key="9">
    <source>
    </source>
</evidence>
<evidence type="ECO:0000269" key="10">
    <source>
    </source>
</evidence>
<evidence type="ECO:0000303" key="11">
    <source>
    </source>
</evidence>
<evidence type="ECO:0000305" key="12"/>
<evidence type="ECO:0000312" key="13">
    <source>
        <dbReference type="Araport" id="AT4G21750"/>
    </source>
</evidence>
<evidence type="ECO:0000312" key="14">
    <source>
        <dbReference type="EMBL" id="CAB36819.1"/>
    </source>
</evidence>
<sequence>MYHPNMFESHHHMFDMTPKNSENDLGITGSHEEDFETKSGAEVTMENPLEEELQDPNQRPNKKKRYHRHTQRQIQELESFFKECPHPDDKQRKELSRELSLEPLQVKFWFQNKRTQMKAQHERHENQILKSENDKLRAENNRYKDALSNATCPNCGGPAAIGEMSFDEQHLRIENARLREEIDRISAIAAKYVGKPLMANSSSFPQLSSSHHIPSRSLDLEVGNFGNNNNSHTGFVGEMFGSSDILRSVSIPSEADKPMIVELAVAAMEELVRMAQTGDPLWVSSDNSVEILNEEEYFRTFPRGIGPKPIGLRSEASRESTVVIMNHINLIEILMDVNQWSSVFCGIVSRALTLEVLSTGVAGNYNGALQVMTAEFQVPSPLVPTRENYFVRYCKQHSDGIWAVVDVSLDSLRPSPITRSRRRPSGCLIQELQNGYSKVTWVEHIEVDDRSVHNMYKPLVNTGLAFGAKRWVATLDRQCERLASSMASNIPACDLSVITSPEGRKSMLKLAERMVMSFCTGVGASTAHAWTTLSTTGSDDVRVMTRKSMDDPGRPPGIVLSAATSFWIPVAPKRVFDFLRDENSRSEWDILSNGGLVQEMAHIANGRDPGNSVSLLRVNSGNSGQSNMLILQESCTDASGSYVIYAPVDIIAMNVVLSGGDPDYVALLPSGFAILPDGSARGGGGSANASAGAGVEGGGEGNNLEVVTTTGSCGGSLLTVAFQILVDSVPTAKLSLGSVATVNSLIKCTVERIKAALACDGA</sequence>
<dbReference type="EMBL" id="U37589">
    <property type="protein sequence ID" value="AAB49378.1"/>
    <property type="status" value="ALT_SEQ"/>
    <property type="molecule type" value="mRNA"/>
</dbReference>
<dbReference type="EMBL" id="AL035527">
    <property type="protein sequence ID" value="CAB36819.1"/>
    <property type="status" value="ALT_SEQ"/>
    <property type="molecule type" value="Genomic_DNA"/>
</dbReference>
<dbReference type="EMBL" id="AL161555">
    <property type="protein sequence ID" value="CAB81282.1"/>
    <property type="status" value="ALT_SEQ"/>
    <property type="molecule type" value="Genomic_DNA"/>
</dbReference>
<dbReference type="EMBL" id="CP002687">
    <property type="protein sequence ID" value="AEE84498.1"/>
    <property type="molecule type" value="Genomic_DNA"/>
</dbReference>
<dbReference type="EMBL" id="CP002687">
    <property type="protein sequence ID" value="AEE84499.1"/>
    <property type="molecule type" value="Genomic_DNA"/>
</dbReference>
<dbReference type="EMBL" id="CP002687">
    <property type="protein sequence ID" value="ANM67574.1"/>
    <property type="molecule type" value="Genomic_DNA"/>
</dbReference>
<dbReference type="EMBL" id="CP002687">
    <property type="protein sequence ID" value="ANM67575.1"/>
    <property type="molecule type" value="Genomic_DNA"/>
</dbReference>
<dbReference type="EMBL" id="AY091104">
    <property type="protein sequence ID" value="AAM14054.1"/>
    <property type="molecule type" value="mRNA"/>
</dbReference>
<dbReference type="EMBL" id="AY150491">
    <property type="protein sequence ID" value="AAN12908.1"/>
    <property type="molecule type" value="mRNA"/>
</dbReference>
<dbReference type="EMBL" id="AK229970">
    <property type="protein sequence ID" value="BAF01795.1"/>
    <property type="molecule type" value="mRNA"/>
</dbReference>
<dbReference type="PIR" id="T05850">
    <property type="entry name" value="T05850"/>
</dbReference>
<dbReference type="RefSeq" id="NP_001031692.1">
    <property type="nucleotide sequence ID" value="NM_001036615.3"/>
</dbReference>
<dbReference type="RefSeq" id="NP_001329394.1">
    <property type="nucleotide sequence ID" value="NM_001341510.1"/>
</dbReference>
<dbReference type="RefSeq" id="NP_001329395.1">
    <property type="nucleotide sequence ID" value="NM_001341511.1"/>
</dbReference>
<dbReference type="RefSeq" id="NP_193906.2">
    <property type="nucleotide sequence ID" value="NM_118295.7"/>
</dbReference>
<dbReference type="SMR" id="Q8RWU4"/>
<dbReference type="BioGRID" id="13552">
    <property type="interactions" value="4"/>
</dbReference>
<dbReference type="FunCoup" id="Q8RWU4">
    <property type="interactions" value="504"/>
</dbReference>
<dbReference type="STRING" id="3702.Q8RWU4"/>
<dbReference type="iPTMnet" id="Q8RWU4"/>
<dbReference type="PaxDb" id="3702-AT4G21750.2"/>
<dbReference type="ProteomicsDB" id="246583"/>
<dbReference type="EnsemblPlants" id="AT4G21750.1">
    <property type="protein sequence ID" value="AT4G21750.1"/>
    <property type="gene ID" value="AT4G21750"/>
</dbReference>
<dbReference type="EnsemblPlants" id="AT4G21750.2">
    <property type="protein sequence ID" value="AT4G21750.2"/>
    <property type="gene ID" value="AT4G21750"/>
</dbReference>
<dbReference type="EnsemblPlants" id="AT4G21750.3">
    <property type="protein sequence ID" value="AT4G21750.3"/>
    <property type="gene ID" value="AT4G21750"/>
</dbReference>
<dbReference type="EnsemblPlants" id="AT4G21750.4">
    <property type="protein sequence ID" value="AT4G21750.4"/>
    <property type="gene ID" value="AT4G21750"/>
</dbReference>
<dbReference type="GeneID" id="828263"/>
<dbReference type="Gramene" id="AT4G21750.1">
    <property type="protein sequence ID" value="AT4G21750.1"/>
    <property type="gene ID" value="AT4G21750"/>
</dbReference>
<dbReference type="Gramene" id="AT4G21750.2">
    <property type="protein sequence ID" value="AT4G21750.2"/>
    <property type="gene ID" value="AT4G21750"/>
</dbReference>
<dbReference type="Gramene" id="AT4G21750.3">
    <property type="protein sequence ID" value="AT4G21750.3"/>
    <property type="gene ID" value="AT4G21750"/>
</dbReference>
<dbReference type="Gramene" id="AT4G21750.4">
    <property type="protein sequence ID" value="AT4G21750.4"/>
    <property type="gene ID" value="AT4G21750"/>
</dbReference>
<dbReference type="KEGG" id="ath:AT4G21750"/>
<dbReference type="Araport" id="AT4G21750"/>
<dbReference type="TAIR" id="AT4G21750">
    <property type="gene designation" value="ATML1"/>
</dbReference>
<dbReference type="eggNOG" id="ENOG502QU3P">
    <property type="taxonomic scope" value="Eukaryota"/>
</dbReference>
<dbReference type="HOGENOM" id="CLU_015002_2_1_1"/>
<dbReference type="InParanoid" id="Q8RWU4"/>
<dbReference type="OMA" id="NMFETHH"/>
<dbReference type="PhylomeDB" id="Q8RWU4"/>
<dbReference type="PRO" id="PR:Q8RWU4"/>
<dbReference type="Proteomes" id="UP000006548">
    <property type="component" value="Chromosome 4"/>
</dbReference>
<dbReference type="ExpressionAtlas" id="Q8RWU4">
    <property type="expression patterns" value="baseline and differential"/>
</dbReference>
<dbReference type="GO" id="GO:0005634">
    <property type="term" value="C:nucleus"/>
    <property type="evidence" value="ECO:0000314"/>
    <property type="project" value="TAIR"/>
</dbReference>
<dbReference type="GO" id="GO:0003677">
    <property type="term" value="F:DNA binding"/>
    <property type="evidence" value="ECO:0000250"/>
    <property type="project" value="TAIR"/>
</dbReference>
<dbReference type="GO" id="GO:0003700">
    <property type="term" value="F:DNA-binding transcription factor activity"/>
    <property type="evidence" value="ECO:0000250"/>
    <property type="project" value="TAIR"/>
</dbReference>
<dbReference type="GO" id="GO:0000981">
    <property type="term" value="F:DNA-binding transcription factor activity, RNA polymerase II-specific"/>
    <property type="evidence" value="ECO:0007669"/>
    <property type="project" value="InterPro"/>
</dbReference>
<dbReference type="GO" id="GO:0008289">
    <property type="term" value="F:lipid binding"/>
    <property type="evidence" value="ECO:0007669"/>
    <property type="project" value="InterPro"/>
</dbReference>
<dbReference type="GO" id="GO:0043565">
    <property type="term" value="F:sequence-specific DNA binding"/>
    <property type="evidence" value="ECO:0000314"/>
    <property type="project" value="TAIR"/>
</dbReference>
<dbReference type="GO" id="GO:0030154">
    <property type="term" value="P:cell differentiation"/>
    <property type="evidence" value="ECO:0000315"/>
    <property type="project" value="UniProtKB"/>
</dbReference>
<dbReference type="GO" id="GO:0048825">
    <property type="term" value="P:cotyledon development"/>
    <property type="evidence" value="ECO:0000316"/>
    <property type="project" value="TAIR"/>
</dbReference>
<dbReference type="GO" id="GO:0090627">
    <property type="term" value="P:plant epidermal cell differentiation"/>
    <property type="evidence" value="ECO:0000315"/>
    <property type="project" value="TAIR"/>
</dbReference>
<dbReference type="GO" id="GO:2000033">
    <property type="term" value="P:regulation of seed dormancy process"/>
    <property type="evidence" value="ECO:0000270"/>
    <property type="project" value="UniProtKB"/>
</dbReference>
<dbReference type="GO" id="GO:0010029">
    <property type="term" value="P:regulation of seed germination"/>
    <property type="evidence" value="ECO:0000270"/>
    <property type="project" value="UniProtKB"/>
</dbReference>
<dbReference type="GO" id="GO:0009845">
    <property type="term" value="P:seed germination"/>
    <property type="evidence" value="ECO:0000315"/>
    <property type="project" value="TAIR"/>
</dbReference>
<dbReference type="CDD" id="cd00086">
    <property type="entry name" value="homeodomain"/>
    <property type="match status" value="1"/>
</dbReference>
<dbReference type="CDD" id="cd08875">
    <property type="entry name" value="START_ArGLABRA2_like"/>
    <property type="match status" value="1"/>
</dbReference>
<dbReference type="FunFam" id="3.30.530.20:FF:000026">
    <property type="entry name" value="Homeobox-leucine zipper protein GLABRA 2"/>
    <property type="match status" value="1"/>
</dbReference>
<dbReference type="FunFam" id="1.10.10.60:FF:000229">
    <property type="entry name" value="Homeobox-leucine zipper protein HDG1"/>
    <property type="match status" value="1"/>
</dbReference>
<dbReference type="Gene3D" id="3.30.530.20">
    <property type="match status" value="1"/>
</dbReference>
<dbReference type="Gene3D" id="1.10.10.60">
    <property type="entry name" value="Homeodomain-like"/>
    <property type="match status" value="1"/>
</dbReference>
<dbReference type="InterPro" id="IPR042160">
    <property type="entry name" value="GLABRA2/ANL2/PDF2/ATML1-like"/>
</dbReference>
<dbReference type="InterPro" id="IPR001356">
    <property type="entry name" value="HD"/>
</dbReference>
<dbReference type="InterPro" id="IPR017970">
    <property type="entry name" value="Homeobox_CS"/>
</dbReference>
<dbReference type="InterPro" id="IPR009057">
    <property type="entry name" value="Homeodomain-like_sf"/>
</dbReference>
<dbReference type="InterPro" id="IPR023393">
    <property type="entry name" value="START-like_dom_sf"/>
</dbReference>
<dbReference type="InterPro" id="IPR002913">
    <property type="entry name" value="START_lipid-bd_dom"/>
</dbReference>
<dbReference type="PANTHER" id="PTHR45654">
    <property type="entry name" value="HOMEOBOX-LEUCINE ZIPPER PROTEIN MERISTEM L1"/>
    <property type="match status" value="1"/>
</dbReference>
<dbReference type="PANTHER" id="PTHR45654:SF77">
    <property type="entry name" value="HOMEOBOX-LEUCINE ZIPPER PROTEIN MERISTEM L1"/>
    <property type="match status" value="1"/>
</dbReference>
<dbReference type="Pfam" id="PF00046">
    <property type="entry name" value="Homeodomain"/>
    <property type="match status" value="1"/>
</dbReference>
<dbReference type="Pfam" id="PF01852">
    <property type="entry name" value="START"/>
    <property type="match status" value="1"/>
</dbReference>
<dbReference type="SMART" id="SM00389">
    <property type="entry name" value="HOX"/>
    <property type="match status" value="1"/>
</dbReference>
<dbReference type="SMART" id="SM00234">
    <property type="entry name" value="START"/>
    <property type="match status" value="1"/>
</dbReference>
<dbReference type="SUPFAM" id="SSF55961">
    <property type="entry name" value="Bet v1-like"/>
    <property type="match status" value="2"/>
</dbReference>
<dbReference type="SUPFAM" id="SSF46689">
    <property type="entry name" value="Homeodomain-like"/>
    <property type="match status" value="1"/>
</dbReference>
<dbReference type="PROSITE" id="PS00027">
    <property type="entry name" value="HOMEOBOX_1"/>
    <property type="match status" value="1"/>
</dbReference>
<dbReference type="PROSITE" id="PS50071">
    <property type="entry name" value="HOMEOBOX_2"/>
    <property type="match status" value="1"/>
</dbReference>
<dbReference type="PROSITE" id="PS50848">
    <property type="entry name" value="START"/>
    <property type="match status" value="1"/>
</dbReference>
<name>ATML1_ARATH</name>
<gene>
    <name evidence="11" type="primary">ATML1</name>
    <name evidence="13" type="ordered locus">At4g21750</name>
    <name evidence="14" type="ORF">F17L22.210</name>
</gene>
<reference key="1">
    <citation type="journal article" date="1996" name="Plant Cell">
        <title>Identification of a meristem L1 layer-specific gene in Arabidopsis that is expressed during embryonic pattern formation and defines a new class of homeobox genes.</title>
        <authorList>
            <person name="Lu P."/>
            <person name="Porat R."/>
            <person name="Nadeau J.A."/>
            <person name="O'Neill S.D."/>
        </authorList>
    </citation>
    <scope>NUCLEOTIDE SEQUENCE [MRNA]</scope>
    <scope>DEVELOPMENTAL STAGE</scope>
    <source>
        <strain>cv. Landsberg erecta</strain>
        <tissue>Meristem</tissue>
    </source>
</reference>
<reference key="2">
    <citation type="journal article" date="1999" name="Nature">
        <title>Sequence and analysis of chromosome 4 of the plant Arabidopsis thaliana.</title>
        <authorList>
            <person name="Mayer K.F.X."/>
            <person name="Schueller C."/>
            <person name="Wambutt R."/>
            <person name="Murphy G."/>
            <person name="Volckaert G."/>
            <person name="Pohl T."/>
            <person name="Duesterhoeft A."/>
            <person name="Stiekema W."/>
            <person name="Entian K.-D."/>
            <person name="Terryn N."/>
            <person name="Harris B."/>
            <person name="Ansorge W."/>
            <person name="Brandt P."/>
            <person name="Grivell L.A."/>
            <person name="Rieger M."/>
            <person name="Weichselgartner M."/>
            <person name="de Simone V."/>
            <person name="Obermaier B."/>
            <person name="Mache R."/>
            <person name="Mueller M."/>
            <person name="Kreis M."/>
            <person name="Delseny M."/>
            <person name="Puigdomenech P."/>
            <person name="Watson M."/>
            <person name="Schmidtheini T."/>
            <person name="Reichert B."/>
            <person name="Portetelle D."/>
            <person name="Perez-Alonso M."/>
            <person name="Boutry M."/>
            <person name="Bancroft I."/>
            <person name="Vos P."/>
            <person name="Hoheisel J."/>
            <person name="Zimmermann W."/>
            <person name="Wedler H."/>
            <person name="Ridley P."/>
            <person name="Langham S.-A."/>
            <person name="McCullagh B."/>
            <person name="Bilham L."/>
            <person name="Robben J."/>
            <person name="van der Schueren J."/>
            <person name="Grymonprez B."/>
            <person name="Chuang Y.-J."/>
            <person name="Vandenbussche F."/>
            <person name="Braeken M."/>
            <person name="Weltjens I."/>
            <person name="Voet M."/>
            <person name="Bastiaens I."/>
            <person name="Aert R."/>
            <person name="Defoor E."/>
            <person name="Weitzenegger T."/>
            <person name="Bothe G."/>
            <person name="Ramsperger U."/>
            <person name="Hilbert H."/>
            <person name="Braun M."/>
            <person name="Holzer E."/>
            <person name="Brandt A."/>
            <person name="Peters S."/>
            <person name="van Staveren M."/>
            <person name="Dirkse W."/>
            <person name="Mooijman P."/>
            <person name="Klein Lankhorst R."/>
            <person name="Rose M."/>
            <person name="Hauf J."/>
            <person name="Koetter P."/>
            <person name="Berneiser S."/>
            <person name="Hempel S."/>
            <person name="Feldpausch M."/>
            <person name="Lamberth S."/>
            <person name="Van den Daele H."/>
            <person name="De Keyser A."/>
            <person name="Buysshaert C."/>
            <person name="Gielen J."/>
            <person name="Villarroel R."/>
            <person name="De Clercq R."/>
            <person name="van Montagu M."/>
            <person name="Rogers J."/>
            <person name="Cronin A."/>
            <person name="Quail M.A."/>
            <person name="Bray-Allen S."/>
            <person name="Clark L."/>
            <person name="Doggett J."/>
            <person name="Hall S."/>
            <person name="Kay M."/>
            <person name="Lennard N."/>
            <person name="McLay K."/>
            <person name="Mayes R."/>
            <person name="Pettett A."/>
            <person name="Rajandream M.A."/>
            <person name="Lyne M."/>
            <person name="Benes V."/>
            <person name="Rechmann S."/>
            <person name="Borkova D."/>
            <person name="Bloecker H."/>
            <person name="Scharfe M."/>
            <person name="Grimm M."/>
            <person name="Loehnert T.-H."/>
            <person name="Dose S."/>
            <person name="de Haan M."/>
            <person name="Maarse A.C."/>
            <person name="Schaefer M."/>
            <person name="Mueller-Auer S."/>
            <person name="Gabel C."/>
            <person name="Fuchs M."/>
            <person name="Fartmann B."/>
            <person name="Granderath K."/>
            <person name="Dauner D."/>
            <person name="Herzl A."/>
            <person name="Neumann S."/>
            <person name="Argiriou A."/>
            <person name="Vitale D."/>
            <person name="Liguori R."/>
            <person name="Piravandi E."/>
            <person name="Massenet O."/>
            <person name="Quigley F."/>
            <person name="Clabauld G."/>
            <person name="Muendlein A."/>
            <person name="Felber R."/>
            <person name="Schnabl S."/>
            <person name="Hiller R."/>
            <person name="Schmidt W."/>
            <person name="Lecharny A."/>
            <person name="Aubourg S."/>
            <person name="Chefdor F."/>
            <person name="Cooke R."/>
            <person name="Berger C."/>
            <person name="Monfort A."/>
            <person name="Casacuberta E."/>
            <person name="Gibbons T."/>
            <person name="Weber N."/>
            <person name="Vandenbol M."/>
            <person name="Bargues M."/>
            <person name="Terol J."/>
            <person name="Torres A."/>
            <person name="Perez-Perez A."/>
            <person name="Purnelle B."/>
            <person name="Bent E."/>
            <person name="Johnson S."/>
            <person name="Tacon D."/>
            <person name="Jesse T."/>
            <person name="Heijnen L."/>
            <person name="Schwarz S."/>
            <person name="Scholler P."/>
            <person name="Heber S."/>
            <person name="Francs P."/>
            <person name="Bielke C."/>
            <person name="Frishman D."/>
            <person name="Haase D."/>
            <person name="Lemcke K."/>
            <person name="Mewes H.-W."/>
            <person name="Stocker S."/>
            <person name="Zaccaria P."/>
            <person name="Bevan M."/>
            <person name="Wilson R.K."/>
            <person name="de la Bastide M."/>
            <person name="Habermann K."/>
            <person name="Parnell L."/>
            <person name="Dedhia N."/>
            <person name="Gnoj L."/>
            <person name="Schutz K."/>
            <person name="Huang E."/>
            <person name="Spiegel L."/>
            <person name="Sekhon M."/>
            <person name="Murray J."/>
            <person name="Sheet P."/>
            <person name="Cordes M."/>
            <person name="Abu-Threideh J."/>
            <person name="Stoneking T."/>
            <person name="Kalicki J."/>
            <person name="Graves T."/>
            <person name="Harmon G."/>
            <person name="Edwards J."/>
            <person name="Latreille P."/>
            <person name="Courtney L."/>
            <person name="Cloud J."/>
            <person name="Abbott A."/>
            <person name="Scott K."/>
            <person name="Johnson D."/>
            <person name="Minx P."/>
            <person name="Bentley D."/>
            <person name="Fulton B."/>
            <person name="Miller N."/>
            <person name="Greco T."/>
            <person name="Kemp K."/>
            <person name="Kramer J."/>
            <person name="Fulton L."/>
            <person name="Mardis E."/>
            <person name="Dante M."/>
            <person name="Pepin K."/>
            <person name="Hillier L.W."/>
            <person name="Nelson J."/>
            <person name="Spieth J."/>
            <person name="Ryan E."/>
            <person name="Andrews S."/>
            <person name="Geisel C."/>
            <person name="Layman D."/>
            <person name="Du H."/>
            <person name="Ali J."/>
            <person name="Berghoff A."/>
            <person name="Jones K."/>
            <person name="Drone K."/>
            <person name="Cotton M."/>
            <person name="Joshu C."/>
            <person name="Antonoiu B."/>
            <person name="Zidanic M."/>
            <person name="Strong C."/>
            <person name="Sun H."/>
            <person name="Lamar B."/>
            <person name="Yordan C."/>
            <person name="Ma P."/>
            <person name="Zhong J."/>
            <person name="Preston R."/>
            <person name="Vil D."/>
            <person name="Shekher M."/>
            <person name="Matero A."/>
            <person name="Shah R."/>
            <person name="Swaby I.K."/>
            <person name="O'Shaughnessy A."/>
            <person name="Rodriguez M."/>
            <person name="Hoffman J."/>
            <person name="Till S."/>
            <person name="Granat S."/>
            <person name="Shohdy N."/>
            <person name="Hasegawa A."/>
            <person name="Hameed A."/>
            <person name="Lodhi M."/>
            <person name="Johnson A."/>
            <person name="Chen E."/>
            <person name="Marra M.A."/>
            <person name="Martienssen R."/>
            <person name="McCombie W.R."/>
        </authorList>
    </citation>
    <scope>NUCLEOTIDE SEQUENCE [LARGE SCALE GENOMIC DNA]</scope>
    <source>
        <strain>cv. Columbia</strain>
    </source>
</reference>
<reference key="3">
    <citation type="journal article" date="2017" name="Plant J.">
        <title>Araport11: a complete reannotation of the Arabidopsis thaliana reference genome.</title>
        <authorList>
            <person name="Cheng C.Y."/>
            <person name="Krishnakumar V."/>
            <person name="Chan A.P."/>
            <person name="Thibaud-Nissen F."/>
            <person name="Schobel S."/>
            <person name="Town C.D."/>
        </authorList>
    </citation>
    <scope>GENOME REANNOTATION</scope>
    <source>
        <strain>cv. Columbia</strain>
    </source>
</reference>
<reference key="4">
    <citation type="journal article" date="2003" name="Science">
        <title>Empirical analysis of transcriptional activity in the Arabidopsis genome.</title>
        <authorList>
            <person name="Yamada K."/>
            <person name="Lim J."/>
            <person name="Dale J.M."/>
            <person name="Chen H."/>
            <person name="Shinn P."/>
            <person name="Palm C.J."/>
            <person name="Southwick A.M."/>
            <person name="Wu H.C."/>
            <person name="Kim C.J."/>
            <person name="Nguyen M."/>
            <person name="Pham P.K."/>
            <person name="Cheuk R.F."/>
            <person name="Karlin-Newmann G."/>
            <person name="Liu S.X."/>
            <person name="Lam B."/>
            <person name="Sakano H."/>
            <person name="Wu T."/>
            <person name="Yu G."/>
            <person name="Miranda M."/>
            <person name="Quach H.L."/>
            <person name="Tripp M."/>
            <person name="Chang C.H."/>
            <person name="Lee J.M."/>
            <person name="Toriumi M.J."/>
            <person name="Chan M.M."/>
            <person name="Tang C.C."/>
            <person name="Onodera C.S."/>
            <person name="Deng J.M."/>
            <person name="Akiyama K."/>
            <person name="Ansari Y."/>
            <person name="Arakawa T."/>
            <person name="Banh J."/>
            <person name="Banno F."/>
            <person name="Bowser L."/>
            <person name="Brooks S.Y."/>
            <person name="Carninci P."/>
            <person name="Chao Q."/>
            <person name="Choy N."/>
            <person name="Enju A."/>
            <person name="Goldsmith A.D."/>
            <person name="Gurjal M."/>
            <person name="Hansen N.F."/>
            <person name="Hayashizaki Y."/>
            <person name="Johnson-Hopson C."/>
            <person name="Hsuan V.W."/>
            <person name="Iida K."/>
            <person name="Karnes M."/>
            <person name="Khan S."/>
            <person name="Koesema E."/>
            <person name="Ishida J."/>
            <person name="Jiang P.X."/>
            <person name="Jones T."/>
            <person name="Kawai J."/>
            <person name="Kamiya A."/>
            <person name="Meyers C."/>
            <person name="Nakajima M."/>
            <person name="Narusaka M."/>
            <person name="Seki M."/>
            <person name="Sakurai T."/>
            <person name="Satou M."/>
            <person name="Tamse R."/>
            <person name="Vaysberg M."/>
            <person name="Wallender E.K."/>
            <person name="Wong C."/>
            <person name="Yamamura Y."/>
            <person name="Yuan S."/>
            <person name="Shinozaki K."/>
            <person name="Davis R.W."/>
            <person name="Theologis A."/>
            <person name="Ecker J.R."/>
        </authorList>
    </citation>
    <scope>NUCLEOTIDE SEQUENCE [LARGE SCALE MRNA]</scope>
    <source>
        <strain>cv. Columbia</strain>
    </source>
</reference>
<reference key="5">
    <citation type="submission" date="2006-07" db="EMBL/GenBank/DDBJ databases">
        <title>Large-scale analysis of RIKEN Arabidopsis full-length (RAFL) cDNAs.</title>
        <authorList>
            <person name="Totoki Y."/>
            <person name="Seki M."/>
            <person name="Ishida J."/>
            <person name="Nakajima M."/>
            <person name="Enju A."/>
            <person name="Kamiya A."/>
            <person name="Narusaka M."/>
            <person name="Shin-i T."/>
            <person name="Nakagawa M."/>
            <person name="Sakamoto N."/>
            <person name="Oishi K."/>
            <person name="Kohara Y."/>
            <person name="Kobayashi M."/>
            <person name="Toyoda A."/>
            <person name="Sakaki Y."/>
            <person name="Sakurai T."/>
            <person name="Iida K."/>
            <person name="Akiyama K."/>
            <person name="Satou M."/>
            <person name="Toyoda T."/>
            <person name="Konagaya A."/>
            <person name="Carninci P."/>
            <person name="Kawai J."/>
            <person name="Hayashizaki Y."/>
            <person name="Shinozaki K."/>
        </authorList>
    </citation>
    <scope>NUCLEOTIDE SEQUENCE [LARGE SCALE MRNA]</scope>
    <source>
        <strain>cv. Columbia</strain>
    </source>
</reference>
<reference key="6">
    <citation type="journal article" date="1999" name="Plant J.">
        <title>The Arabidopsis thaliana MERISTEM LAYER 1 promoter specifies epidermal expression in meristems and young primordia.</title>
        <authorList>
            <person name="Sessions A."/>
            <person name="Weigel D."/>
            <person name="Yanofsky M.F."/>
        </authorList>
    </citation>
    <scope>DEVELOPMENTAL STAGE</scope>
</reference>
<reference key="7">
    <citation type="journal article" date="2001" name="Plant J.">
        <title>Identification of a cis-regulatory element for L1 layer-specific gene expression, which is targeted by an L1-specific homeodomain protein.</title>
        <authorList>
            <person name="Abe M."/>
            <person name="Takahashi T."/>
            <person name="Komeda Y."/>
        </authorList>
    </citation>
    <scope>FUNCTION</scope>
</reference>
<reference key="8">
    <citation type="journal article" date="2000" name="Plant Mol. Biol.">
        <title>Organization and structural evolution of four multigene families in Arabidopsis thaliana: AtLCAD, AtLGT, AtMYST and AtHD-GL2.</title>
        <authorList>
            <person name="Tavares R."/>
            <person name="Aubourg S."/>
            <person name="Lecharny A."/>
            <person name="Kreis M."/>
        </authorList>
    </citation>
    <scope>GENE FAMILY</scope>
</reference>
<reference key="9">
    <citation type="journal article" date="2003" name="Development">
        <title>Regulation of shoot epidermal cell differentiation by a pair of homeodomain proteins in Arabidopsis.</title>
        <authorList>
            <person name="Abe M."/>
            <person name="Katsumata H."/>
            <person name="Komeda Y."/>
            <person name="Takahashi T."/>
        </authorList>
    </citation>
    <scope>FUNCTION</scope>
</reference>
<reference key="10">
    <citation type="journal article" date="2006" name="Plant Physiol.">
        <title>Characterization of the class IV homeodomain-leucine zipper gene family in Arabidopsis.</title>
        <authorList>
            <person name="Nakamura M."/>
            <person name="Katsumata H."/>
            <person name="Abe M."/>
            <person name="Yabe N."/>
            <person name="Komeda Y."/>
            <person name="Yamamoto K.T."/>
            <person name="Takahashi T."/>
        </authorList>
    </citation>
    <scope>GENE FAMILY</scope>
    <scope>NOMENCLATURE</scope>
</reference>
<reference key="11">
    <citation type="journal article" date="2014" name="Plant Cell">
        <title>Arabidopsis DELLA and two HD-ZIP transcription factors regulate GA signaling in the epidermis through the L1 box cis-element.</title>
        <authorList>
            <person name="Rombola-Caldentey B."/>
            <person name="Rueda-Romero P."/>
            <person name="Iglesias-Fernandez R."/>
            <person name="Carbonero P."/>
            <person name="Onate-Sanchez L."/>
        </authorList>
    </citation>
    <scope>FUNCTION</scope>
    <scope>DISRUPTION PHENOTYPE</scope>
    <scope>INDUCTION BY IMBIBITION</scope>
    <scope>INTERACTION WITH GAI/RGA2; RGA/RGA1/GRS; RGL2/SCL19 AND PDF2</scope>
    <source>
        <strain>cv. Columbia</strain>
        <strain>cv. Landsberg erecta</strain>
    </source>
</reference>
<reference key="12">
    <citation type="journal article" date="2015" name="Development">
        <title>AIL and HDG proteins act antagonistically to control cell proliferation.</title>
        <authorList>
            <person name="Horstman A."/>
            <person name="Fukuoka H."/>
            <person name="Muino J.M."/>
            <person name="Nitsch L."/>
            <person name="Guo C."/>
            <person name="Passarinho P."/>
            <person name="Sanchez-Perez G."/>
            <person name="Immink R."/>
            <person name="Angenent G."/>
            <person name="Boutilier K."/>
        </authorList>
    </citation>
    <scope>FUNCTION</scope>
    <scope>DISRUPTION PHENOTYPE</scope>
    <scope>INTERACTION WITH AIL7/PLT7; ANT; BBM AND AIL1</scope>
    <source>
        <strain>cv. Columbia</strain>
    </source>
</reference>
<proteinExistence type="evidence at protein level"/>
<comment type="function">
    <text evidence="6 7 8 9">Probable transcription factor involved in cell specification and pattern formation during embryogenesis. Binds to the L1 box DNA sequence 5'-TAAATG[CT]A-3'. Plays a role in maintaining the identity of L1 cells, possibly by interacting with their L1 box or other target-gene promoters; binds to the LIP1 gene promoter and stimulates its expression upon imbibition (PubMed:24989044). Acts as a positive regulator of gibberellins (GAs)-regulated epidermal gene expression (e.g. LIP1, LIP2, LTP1, FDH and PDF1) (PubMed:24989044). Functionally redundant to PDF2 (PubMed:24989044). Seems to promote cell differentiation (PubMed:25564655).</text>
</comment>
<comment type="subunit">
    <text evidence="8 9">Interacts with GAI/RGA2, RGA/RGA1/GRS, RGL2/SCL19 and PDF2 (PubMed:24989044). Interacts with AIL7/PLT7, ANT, BBM and AIL1 (PubMed:25564655).</text>
</comment>
<comment type="subcellular location">
    <subcellularLocation>
        <location evidence="12">Nucleus</location>
    </subcellularLocation>
</comment>
<comment type="developmental stage">
    <text evidence="5 10">First expressed in the apical cell after the first asymmetric division of the zygote. Expressed in all proembryo cells until the eight-cell stage, and then restricted to the protoderm in the 16-cell proembryo. Not detected in the torpedo stage, but reappeared later in the L1 layer of the shoot apical meristem in the mature embryo. After germination, the L1 layer-specific expression pattern is maintained in the vegetative shoot apical meristem, inflorescence, floral meristems, and the young floral organ primordia. Finally, expressed in the protoderm of the ovule primordia and integuments and gradually restricted to the endothelium surrounding the embryo sac.</text>
</comment>
<comment type="induction">
    <text evidence="8">Stimulated during seed imbibition (PubMed:24989044). Induced by gibberellins (GAs) and repressed by DELLA proteins in an ATML1- and PDF2-dependent manner (PubMed:24989044). Upon seed imbibition, increased GA levels in the epidermis reduce DELLA proteins (e.g. GAI/RGA2, RGA/RGA1/GRS and RGL2/SCL19) abundance and release, in turn, ATML1 and PDF2 which activate LIP1 expression, thus enhancing germination potential (PubMed:24989044).</text>
</comment>
<comment type="disruption phenotype">
    <text evidence="8 9">Plants missing both PDF2 and ATML1 have reduced levels of L1 box/ gibberellic acid (GA)-regulated putative targets, including LIP1, LIP2, LTP1, FDH and PDF1, in the presence of GA and during seed germination, thus leading to a delayed germination upon imbibition (PubMed:24989044). In plants missing HDG3, HDG7, HDG11, PDF2 and ATML1, increased cell division leading to cell overproliferation (PubMed:25564655).</text>
</comment>
<comment type="similarity">
    <text evidence="12">Belongs to the HD-ZIP homeobox family. Class IV subfamily.</text>
</comment>
<comment type="sequence caution" evidence="12">
    <conflict type="miscellaneous discrepancy">
        <sequence resource="EMBL-CDS" id="AAB49378"/>
    </conflict>
    <text>Probable cloning artifact leading to a deletion into the sequence.</text>
</comment>
<comment type="sequence caution" evidence="12">
    <conflict type="erroneous gene model prediction">
        <sequence resource="EMBL-CDS" id="CAB36819"/>
    </conflict>
</comment>
<comment type="sequence caution" evidence="12">
    <conflict type="erroneous gene model prediction">
        <sequence resource="EMBL-CDS" id="CAB81282"/>
    </conflict>
</comment>
<protein>
    <recommendedName>
        <fullName evidence="11">Homeobox-leucine zipper protein MERISTEM L1</fullName>
    </recommendedName>
    <alternativeName>
        <fullName evidence="11">HD-ZIP protein ATML1</fullName>
    </alternativeName>
    <alternativeName>
        <fullName evidence="11">Homeodomain transcription factor ATML1</fullName>
    </alternativeName>
</protein>